<keyword id="KW-0012">Acyltransferase</keyword>
<keyword id="KW-0133">Cell shape</keyword>
<keyword id="KW-0961">Cell wall biogenesis/degradation</keyword>
<keyword id="KW-0963">Cytoplasm</keyword>
<keyword id="KW-0460">Magnesium</keyword>
<keyword id="KW-0479">Metal-binding</keyword>
<keyword id="KW-0511">Multifunctional enzyme</keyword>
<keyword id="KW-0548">Nucleotidyltransferase</keyword>
<keyword id="KW-0573">Peptidoglycan synthesis</keyword>
<keyword id="KW-0677">Repeat</keyword>
<keyword id="KW-0808">Transferase</keyword>
<sequence length="453" mass="48652">MKFSTVILAAGKGTRMHSNMPKVLHTLAGKPMVKHVIDTCNNLGAQNIHLVYGHGGDQMQQALVNENVNWVLQAQQLGTGHAVDQASPHFQDDEKILVLYGDVPLISEDTIESLLEAQPTDGIALLTVVLEDPTGYGRIVRKRGPVVAIVEQKDASEEQKLIKEVNTGVLVATGRDLKRWLAGLNNNNAQGEYYLTDVIAAAHDEGRAVEAVHPSHSIEVEGVNDRIQLARLERAFQARQAKKLLEQGVMLRDPARFDLRGTLQCGSDVEIDVNVIIEGNVSIGNNVVIGAGSILKDCEIDDNTVIRPYSVIEGATVGENCTVGPFTRLRPGAELRDDAHVGNFVEMKNARLGEGSKANHLTYLGDAEIGKGVNVGAGVITCNYDGANKHKTVIGDDVFVGSDCQLVAPVTIGNGATIGAGTTLTKNVAEGELVITRAPERKIAGWQRPAKKK</sequence>
<feature type="chain" id="PRO_1000186509" description="Bifunctional protein GlmU">
    <location>
        <begin position="1"/>
        <end position="453"/>
    </location>
</feature>
<feature type="region of interest" description="Pyrophosphorylase" evidence="1">
    <location>
        <begin position="1"/>
        <end position="226"/>
    </location>
</feature>
<feature type="region of interest" description="Linker" evidence="1">
    <location>
        <begin position="227"/>
        <end position="247"/>
    </location>
</feature>
<feature type="region of interest" description="N-acetyltransferase" evidence="1">
    <location>
        <begin position="248"/>
        <end position="453"/>
    </location>
</feature>
<feature type="active site" description="Proton acceptor" evidence="1">
    <location>
        <position position="360"/>
    </location>
</feature>
<feature type="binding site" evidence="1">
    <location>
        <begin position="8"/>
        <end position="11"/>
    </location>
    <ligand>
        <name>UDP-N-acetyl-alpha-D-glucosamine</name>
        <dbReference type="ChEBI" id="CHEBI:57705"/>
    </ligand>
</feature>
<feature type="binding site" evidence="1">
    <location>
        <position position="22"/>
    </location>
    <ligand>
        <name>UDP-N-acetyl-alpha-D-glucosamine</name>
        <dbReference type="ChEBI" id="CHEBI:57705"/>
    </ligand>
</feature>
<feature type="binding site" evidence="1">
    <location>
        <position position="73"/>
    </location>
    <ligand>
        <name>UDP-N-acetyl-alpha-D-glucosamine</name>
        <dbReference type="ChEBI" id="CHEBI:57705"/>
    </ligand>
</feature>
<feature type="binding site" evidence="1">
    <location>
        <begin position="78"/>
        <end position="79"/>
    </location>
    <ligand>
        <name>UDP-N-acetyl-alpha-D-glucosamine</name>
        <dbReference type="ChEBI" id="CHEBI:57705"/>
    </ligand>
</feature>
<feature type="binding site" evidence="1">
    <location>
        <begin position="100"/>
        <end position="102"/>
    </location>
    <ligand>
        <name>UDP-N-acetyl-alpha-D-glucosamine</name>
        <dbReference type="ChEBI" id="CHEBI:57705"/>
    </ligand>
</feature>
<feature type="binding site" evidence="1">
    <location>
        <position position="102"/>
    </location>
    <ligand>
        <name>Mg(2+)</name>
        <dbReference type="ChEBI" id="CHEBI:18420"/>
    </ligand>
</feature>
<feature type="binding site" evidence="1">
    <location>
        <position position="137"/>
    </location>
    <ligand>
        <name>UDP-N-acetyl-alpha-D-glucosamine</name>
        <dbReference type="ChEBI" id="CHEBI:57705"/>
    </ligand>
</feature>
<feature type="binding site" evidence="1">
    <location>
        <position position="151"/>
    </location>
    <ligand>
        <name>UDP-N-acetyl-alpha-D-glucosamine</name>
        <dbReference type="ChEBI" id="CHEBI:57705"/>
    </ligand>
</feature>
<feature type="binding site" evidence="1">
    <location>
        <position position="166"/>
    </location>
    <ligand>
        <name>UDP-N-acetyl-alpha-D-glucosamine</name>
        <dbReference type="ChEBI" id="CHEBI:57705"/>
    </ligand>
</feature>
<feature type="binding site" evidence="1">
    <location>
        <position position="224"/>
    </location>
    <ligand>
        <name>Mg(2+)</name>
        <dbReference type="ChEBI" id="CHEBI:18420"/>
    </ligand>
</feature>
<feature type="binding site" evidence="1">
    <location>
        <position position="224"/>
    </location>
    <ligand>
        <name>UDP-N-acetyl-alpha-D-glucosamine</name>
        <dbReference type="ChEBI" id="CHEBI:57705"/>
    </ligand>
</feature>
<feature type="binding site" evidence="1">
    <location>
        <position position="330"/>
    </location>
    <ligand>
        <name>UDP-N-acetyl-alpha-D-glucosamine</name>
        <dbReference type="ChEBI" id="CHEBI:57705"/>
    </ligand>
</feature>
<feature type="binding site" evidence="1">
    <location>
        <position position="348"/>
    </location>
    <ligand>
        <name>UDP-N-acetyl-alpha-D-glucosamine</name>
        <dbReference type="ChEBI" id="CHEBI:57705"/>
    </ligand>
</feature>
<feature type="binding site" evidence="1">
    <location>
        <position position="363"/>
    </location>
    <ligand>
        <name>UDP-N-acetyl-alpha-D-glucosamine</name>
        <dbReference type="ChEBI" id="CHEBI:57705"/>
    </ligand>
</feature>
<feature type="binding site" evidence="1">
    <location>
        <position position="374"/>
    </location>
    <ligand>
        <name>UDP-N-acetyl-alpha-D-glucosamine</name>
        <dbReference type="ChEBI" id="CHEBI:57705"/>
    </ligand>
</feature>
<feature type="binding site" evidence="1">
    <location>
        <position position="377"/>
    </location>
    <ligand>
        <name>acetyl-CoA</name>
        <dbReference type="ChEBI" id="CHEBI:57288"/>
    </ligand>
</feature>
<feature type="binding site" evidence="1">
    <location>
        <begin position="383"/>
        <end position="384"/>
    </location>
    <ligand>
        <name>acetyl-CoA</name>
        <dbReference type="ChEBI" id="CHEBI:57288"/>
    </ligand>
</feature>
<feature type="binding site" evidence="1">
    <location>
        <position position="402"/>
    </location>
    <ligand>
        <name>acetyl-CoA</name>
        <dbReference type="ChEBI" id="CHEBI:57288"/>
    </ligand>
</feature>
<feature type="binding site" evidence="1">
    <location>
        <position position="420"/>
    </location>
    <ligand>
        <name>acetyl-CoA</name>
        <dbReference type="ChEBI" id="CHEBI:57288"/>
    </ligand>
</feature>
<feature type="binding site" evidence="1">
    <location>
        <position position="437"/>
    </location>
    <ligand>
        <name>acetyl-CoA</name>
        <dbReference type="ChEBI" id="CHEBI:57288"/>
    </ligand>
</feature>
<dbReference type="EC" id="2.7.7.23" evidence="1"/>
<dbReference type="EC" id="2.3.1.157" evidence="1"/>
<dbReference type="EMBL" id="CP001233">
    <property type="protein sequence ID" value="ACP06974.1"/>
    <property type="molecule type" value="Genomic_DNA"/>
</dbReference>
<dbReference type="RefSeq" id="WP_001892013.1">
    <property type="nucleotide sequence ID" value="NC_012578.1"/>
</dbReference>
<dbReference type="SMR" id="C3LSI7"/>
<dbReference type="GeneID" id="69721146"/>
<dbReference type="KEGG" id="vcm:VCM66_2682"/>
<dbReference type="HOGENOM" id="CLU_029499_15_2_6"/>
<dbReference type="UniPathway" id="UPA00113">
    <property type="reaction ID" value="UER00532"/>
</dbReference>
<dbReference type="UniPathway" id="UPA00113">
    <property type="reaction ID" value="UER00533"/>
</dbReference>
<dbReference type="UniPathway" id="UPA00973"/>
<dbReference type="Proteomes" id="UP000001217">
    <property type="component" value="Chromosome I"/>
</dbReference>
<dbReference type="GO" id="GO:0005737">
    <property type="term" value="C:cytoplasm"/>
    <property type="evidence" value="ECO:0007669"/>
    <property type="project" value="UniProtKB-SubCell"/>
</dbReference>
<dbReference type="GO" id="GO:0016020">
    <property type="term" value="C:membrane"/>
    <property type="evidence" value="ECO:0007669"/>
    <property type="project" value="GOC"/>
</dbReference>
<dbReference type="GO" id="GO:0019134">
    <property type="term" value="F:glucosamine-1-phosphate N-acetyltransferase activity"/>
    <property type="evidence" value="ECO:0007669"/>
    <property type="project" value="UniProtKB-UniRule"/>
</dbReference>
<dbReference type="GO" id="GO:0000287">
    <property type="term" value="F:magnesium ion binding"/>
    <property type="evidence" value="ECO:0007669"/>
    <property type="project" value="UniProtKB-UniRule"/>
</dbReference>
<dbReference type="GO" id="GO:0003977">
    <property type="term" value="F:UDP-N-acetylglucosamine diphosphorylase activity"/>
    <property type="evidence" value="ECO:0007669"/>
    <property type="project" value="UniProtKB-UniRule"/>
</dbReference>
<dbReference type="GO" id="GO:0000902">
    <property type="term" value="P:cell morphogenesis"/>
    <property type="evidence" value="ECO:0007669"/>
    <property type="project" value="UniProtKB-UniRule"/>
</dbReference>
<dbReference type="GO" id="GO:0071555">
    <property type="term" value="P:cell wall organization"/>
    <property type="evidence" value="ECO:0007669"/>
    <property type="project" value="UniProtKB-KW"/>
</dbReference>
<dbReference type="GO" id="GO:0009245">
    <property type="term" value="P:lipid A biosynthetic process"/>
    <property type="evidence" value="ECO:0007669"/>
    <property type="project" value="UniProtKB-UniRule"/>
</dbReference>
<dbReference type="GO" id="GO:0009252">
    <property type="term" value="P:peptidoglycan biosynthetic process"/>
    <property type="evidence" value="ECO:0007669"/>
    <property type="project" value="UniProtKB-UniRule"/>
</dbReference>
<dbReference type="GO" id="GO:0008360">
    <property type="term" value="P:regulation of cell shape"/>
    <property type="evidence" value="ECO:0007669"/>
    <property type="project" value="UniProtKB-KW"/>
</dbReference>
<dbReference type="GO" id="GO:0006048">
    <property type="term" value="P:UDP-N-acetylglucosamine biosynthetic process"/>
    <property type="evidence" value="ECO:0007669"/>
    <property type="project" value="UniProtKB-UniPathway"/>
</dbReference>
<dbReference type="CDD" id="cd02540">
    <property type="entry name" value="GT2_GlmU_N_bac"/>
    <property type="match status" value="1"/>
</dbReference>
<dbReference type="CDD" id="cd03353">
    <property type="entry name" value="LbH_GlmU_C"/>
    <property type="match status" value="1"/>
</dbReference>
<dbReference type="FunFam" id="3.90.550.10:FF:000006">
    <property type="entry name" value="Bifunctional protein GlmU"/>
    <property type="match status" value="1"/>
</dbReference>
<dbReference type="Gene3D" id="2.160.10.10">
    <property type="entry name" value="Hexapeptide repeat proteins"/>
    <property type="match status" value="1"/>
</dbReference>
<dbReference type="Gene3D" id="3.90.550.10">
    <property type="entry name" value="Spore Coat Polysaccharide Biosynthesis Protein SpsA, Chain A"/>
    <property type="match status" value="1"/>
</dbReference>
<dbReference type="HAMAP" id="MF_01631">
    <property type="entry name" value="GlmU"/>
    <property type="match status" value="1"/>
</dbReference>
<dbReference type="InterPro" id="IPR005882">
    <property type="entry name" value="Bifunctional_GlmU"/>
</dbReference>
<dbReference type="InterPro" id="IPR050065">
    <property type="entry name" value="GlmU-like"/>
</dbReference>
<dbReference type="InterPro" id="IPR038009">
    <property type="entry name" value="GlmU_C_LbH"/>
</dbReference>
<dbReference type="InterPro" id="IPR001451">
    <property type="entry name" value="Hexapep"/>
</dbReference>
<dbReference type="InterPro" id="IPR025877">
    <property type="entry name" value="MobA-like_NTP_Trfase"/>
</dbReference>
<dbReference type="InterPro" id="IPR029044">
    <property type="entry name" value="Nucleotide-diphossugar_trans"/>
</dbReference>
<dbReference type="InterPro" id="IPR011004">
    <property type="entry name" value="Trimer_LpxA-like_sf"/>
</dbReference>
<dbReference type="NCBIfam" id="TIGR01173">
    <property type="entry name" value="glmU"/>
    <property type="match status" value="1"/>
</dbReference>
<dbReference type="NCBIfam" id="NF006986">
    <property type="entry name" value="PRK09451.1"/>
    <property type="match status" value="1"/>
</dbReference>
<dbReference type="PANTHER" id="PTHR43584:SF3">
    <property type="entry name" value="BIFUNCTIONAL PROTEIN GLMU"/>
    <property type="match status" value="1"/>
</dbReference>
<dbReference type="PANTHER" id="PTHR43584">
    <property type="entry name" value="NUCLEOTIDYL TRANSFERASE"/>
    <property type="match status" value="1"/>
</dbReference>
<dbReference type="Pfam" id="PF00132">
    <property type="entry name" value="Hexapep"/>
    <property type="match status" value="1"/>
</dbReference>
<dbReference type="Pfam" id="PF12804">
    <property type="entry name" value="NTP_transf_3"/>
    <property type="match status" value="1"/>
</dbReference>
<dbReference type="SUPFAM" id="SSF53448">
    <property type="entry name" value="Nucleotide-diphospho-sugar transferases"/>
    <property type="match status" value="1"/>
</dbReference>
<dbReference type="SUPFAM" id="SSF51161">
    <property type="entry name" value="Trimeric LpxA-like enzymes"/>
    <property type="match status" value="1"/>
</dbReference>
<organism>
    <name type="scientific">Vibrio cholerae serotype O1 (strain M66-2)</name>
    <dbReference type="NCBI Taxonomy" id="579112"/>
    <lineage>
        <taxon>Bacteria</taxon>
        <taxon>Pseudomonadati</taxon>
        <taxon>Pseudomonadota</taxon>
        <taxon>Gammaproteobacteria</taxon>
        <taxon>Vibrionales</taxon>
        <taxon>Vibrionaceae</taxon>
        <taxon>Vibrio</taxon>
    </lineage>
</organism>
<proteinExistence type="inferred from homology"/>
<gene>
    <name evidence="1" type="primary">glmU</name>
    <name type="ordered locus">VCM66_2682</name>
</gene>
<accession>C3LSI7</accession>
<evidence type="ECO:0000255" key="1">
    <source>
        <dbReference type="HAMAP-Rule" id="MF_01631"/>
    </source>
</evidence>
<reference key="1">
    <citation type="journal article" date="2008" name="PLoS ONE">
        <title>A recalibrated molecular clock and independent origins for the cholera pandemic clones.</title>
        <authorList>
            <person name="Feng L."/>
            <person name="Reeves P.R."/>
            <person name="Lan R."/>
            <person name="Ren Y."/>
            <person name="Gao C."/>
            <person name="Zhou Z."/>
            <person name="Ren Y."/>
            <person name="Cheng J."/>
            <person name="Wang W."/>
            <person name="Wang J."/>
            <person name="Qian W."/>
            <person name="Li D."/>
            <person name="Wang L."/>
        </authorList>
    </citation>
    <scope>NUCLEOTIDE SEQUENCE [LARGE SCALE GENOMIC DNA]</scope>
    <source>
        <strain>M66-2</strain>
    </source>
</reference>
<name>GLMU_VIBCM</name>
<protein>
    <recommendedName>
        <fullName evidence="1">Bifunctional protein GlmU</fullName>
    </recommendedName>
    <domain>
        <recommendedName>
            <fullName evidence="1">UDP-N-acetylglucosamine pyrophosphorylase</fullName>
            <ecNumber evidence="1">2.7.7.23</ecNumber>
        </recommendedName>
        <alternativeName>
            <fullName evidence="1">N-acetylglucosamine-1-phosphate uridyltransferase</fullName>
        </alternativeName>
    </domain>
    <domain>
        <recommendedName>
            <fullName evidence="1">Glucosamine-1-phosphate N-acetyltransferase</fullName>
            <ecNumber evidence="1">2.3.1.157</ecNumber>
        </recommendedName>
    </domain>
</protein>
<comment type="function">
    <text evidence="1">Catalyzes the last two sequential reactions in the de novo biosynthetic pathway for UDP-N-acetylglucosamine (UDP-GlcNAc). The C-terminal domain catalyzes the transfer of acetyl group from acetyl coenzyme A to glucosamine-1-phosphate (GlcN-1-P) to produce N-acetylglucosamine-1-phosphate (GlcNAc-1-P), which is converted into UDP-GlcNAc by the transfer of uridine 5-monophosphate (from uridine 5-triphosphate), a reaction catalyzed by the N-terminal domain.</text>
</comment>
<comment type="catalytic activity">
    <reaction evidence="1">
        <text>alpha-D-glucosamine 1-phosphate + acetyl-CoA = N-acetyl-alpha-D-glucosamine 1-phosphate + CoA + H(+)</text>
        <dbReference type="Rhea" id="RHEA:13725"/>
        <dbReference type="ChEBI" id="CHEBI:15378"/>
        <dbReference type="ChEBI" id="CHEBI:57287"/>
        <dbReference type="ChEBI" id="CHEBI:57288"/>
        <dbReference type="ChEBI" id="CHEBI:57776"/>
        <dbReference type="ChEBI" id="CHEBI:58516"/>
        <dbReference type="EC" id="2.3.1.157"/>
    </reaction>
</comment>
<comment type="catalytic activity">
    <reaction evidence="1">
        <text>N-acetyl-alpha-D-glucosamine 1-phosphate + UTP + H(+) = UDP-N-acetyl-alpha-D-glucosamine + diphosphate</text>
        <dbReference type="Rhea" id="RHEA:13509"/>
        <dbReference type="ChEBI" id="CHEBI:15378"/>
        <dbReference type="ChEBI" id="CHEBI:33019"/>
        <dbReference type="ChEBI" id="CHEBI:46398"/>
        <dbReference type="ChEBI" id="CHEBI:57705"/>
        <dbReference type="ChEBI" id="CHEBI:57776"/>
        <dbReference type="EC" id="2.7.7.23"/>
    </reaction>
</comment>
<comment type="cofactor">
    <cofactor evidence="1">
        <name>Mg(2+)</name>
        <dbReference type="ChEBI" id="CHEBI:18420"/>
    </cofactor>
    <text evidence="1">Binds 1 Mg(2+) ion per subunit.</text>
</comment>
<comment type="pathway">
    <text evidence="1">Nucleotide-sugar biosynthesis; UDP-N-acetyl-alpha-D-glucosamine biosynthesis; N-acetyl-alpha-D-glucosamine 1-phosphate from alpha-D-glucosamine 6-phosphate (route II): step 2/2.</text>
</comment>
<comment type="pathway">
    <text evidence="1">Nucleotide-sugar biosynthesis; UDP-N-acetyl-alpha-D-glucosamine biosynthesis; UDP-N-acetyl-alpha-D-glucosamine from N-acetyl-alpha-D-glucosamine 1-phosphate: step 1/1.</text>
</comment>
<comment type="pathway">
    <text evidence="1">Bacterial outer membrane biogenesis; LPS lipid A biosynthesis.</text>
</comment>
<comment type="subunit">
    <text evidence="1">Homotrimer.</text>
</comment>
<comment type="subcellular location">
    <subcellularLocation>
        <location evidence="1">Cytoplasm</location>
    </subcellularLocation>
</comment>
<comment type="similarity">
    <text evidence="1">In the N-terminal section; belongs to the N-acetylglucosamine-1-phosphate uridyltransferase family.</text>
</comment>
<comment type="similarity">
    <text evidence="1">In the C-terminal section; belongs to the transferase hexapeptide repeat family.</text>
</comment>